<gene>
    <name type="primary">rar1</name>
    <name type="synonym">mes1</name>
    <name type="synonym">mrs1</name>
    <name type="ORF">pi042</name>
    <name type="ORF">SPBC17A3.04c</name>
</gene>
<evidence type="ECO:0000269" key="1">
    <source>
    </source>
</evidence>
<evidence type="ECO:0000305" key="2"/>
<proteinExistence type="inferred from homology"/>
<feature type="chain" id="PRO_0000139268" description="Probable methionine--tRNA ligase, cytoplasmic">
    <location>
        <begin position="1"/>
        <end position="782"/>
    </location>
</feature>
<feature type="short sequence motif" description="'HIGH' region">
    <location>
        <begin position="231"/>
        <end position="241"/>
    </location>
</feature>
<feature type="short sequence motif" description="'KMSKS' region">
    <location>
        <begin position="551"/>
        <end position="555"/>
    </location>
</feature>
<protein>
    <recommendedName>
        <fullName>Probable methionine--tRNA ligase, cytoplasmic</fullName>
        <ecNumber>6.1.1.10</ecNumber>
    </recommendedName>
    <alternativeName>
        <fullName>Methionyl-tRNA synthetase</fullName>
        <shortName>MetRS</shortName>
    </alternativeName>
</protein>
<dbReference type="EC" id="6.1.1.10"/>
<dbReference type="EMBL" id="AB004537">
    <property type="protein sequence ID" value="BAA21422.1"/>
    <property type="status" value="ALT_SEQ"/>
    <property type="molecule type" value="Genomic_DNA"/>
</dbReference>
<dbReference type="EMBL" id="CU329671">
    <property type="protein sequence ID" value="CAB51763.1"/>
    <property type="molecule type" value="Genomic_DNA"/>
</dbReference>
<dbReference type="PIR" id="T39696">
    <property type="entry name" value="T39696"/>
</dbReference>
<dbReference type="RefSeq" id="NP_595586.1">
    <property type="nucleotide sequence ID" value="NM_001021482.2"/>
</dbReference>
<dbReference type="SMR" id="Q9UUF2"/>
<dbReference type="BioGRID" id="276590">
    <property type="interactions" value="6"/>
</dbReference>
<dbReference type="FunCoup" id="Q9UUF2">
    <property type="interactions" value="558"/>
</dbReference>
<dbReference type="STRING" id="284812.Q9UUF2"/>
<dbReference type="iPTMnet" id="Q9UUF2"/>
<dbReference type="PaxDb" id="4896-SPBC17A3.04c.1"/>
<dbReference type="EnsemblFungi" id="SPBC17A3.04c.1">
    <property type="protein sequence ID" value="SPBC17A3.04c.1:pep"/>
    <property type="gene ID" value="SPBC17A3.04c"/>
</dbReference>
<dbReference type="GeneID" id="2540052"/>
<dbReference type="KEGG" id="spo:2540052"/>
<dbReference type="PomBase" id="SPBC17A3.04c">
    <property type="gene designation" value="rar1"/>
</dbReference>
<dbReference type="VEuPathDB" id="FungiDB:SPBC17A3.04c"/>
<dbReference type="eggNOG" id="KOG1247">
    <property type="taxonomic scope" value="Eukaryota"/>
</dbReference>
<dbReference type="HOGENOM" id="CLU_009710_4_1_1"/>
<dbReference type="InParanoid" id="Q9UUF2"/>
<dbReference type="OMA" id="HLNTTEY"/>
<dbReference type="PhylomeDB" id="Q9UUF2"/>
<dbReference type="PRO" id="PR:Q9UUF2"/>
<dbReference type="Proteomes" id="UP000002485">
    <property type="component" value="Chromosome II"/>
</dbReference>
<dbReference type="GO" id="GO:0017101">
    <property type="term" value="C:aminoacyl-tRNA synthetase multienzyme complex"/>
    <property type="evidence" value="ECO:0000318"/>
    <property type="project" value="GO_Central"/>
</dbReference>
<dbReference type="GO" id="GO:0010494">
    <property type="term" value="C:cytoplasmic stress granule"/>
    <property type="evidence" value="ECO:0000269"/>
    <property type="project" value="PomBase"/>
</dbReference>
<dbReference type="GO" id="GO:0005829">
    <property type="term" value="C:cytosol"/>
    <property type="evidence" value="ECO:0007005"/>
    <property type="project" value="PomBase"/>
</dbReference>
<dbReference type="GO" id="GO:0017102">
    <property type="term" value="C:methionyl glutamyl tRNA synthetase complex"/>
    <property type="evidence" value="ECO:0000353"/>
    <property type="project" value="PomBase"/>
</dbReference>
<dbReference type="GO" id="GO:0005524">
    <property type="term" value="F:ATP binding"/>
    <property type="evidence" value="ECO:0007669"/>
    <property type="project" value="UniProtKB-KW"/>
</dbReference>
<dbReference type="GO" id="GO:0004825">
    <property type="term" value="F:methionine-tRNA ligase activity"/>
    <property type="evidence" value="ECO:0000318"/>
    <property type="project" value="GO_Central"/>
</dbReference>
<dbReference type="GO" id="GO:0002181">
    <property type="term" value="P:cytoplasmic translation"/>
    <property type="evidence" value="ECO:0000303"/>
    <property type="project" value="PomBase"/>
</dbReference>
<dbReference type="GO" id="GO:0006431">
    <property type="term" value="P:methionyl-tRNA aminoacylation"/>
    <property type="evidence" value="ECO:0000318"/>
    <property type="project" value="GO_Central"/>
</dbReference>
<dbReference type="CDD" id="cd07957">
    <property type="entry name" value="Anticodon_Ia_Met"/>
    <property type="match status" value="1"/>
</dbReference>
<dbReference type="CDD" id="cd00814">
    <property type="entry name" value="MetRS_core"/>
    <property type="match status" value="1"/>
</dbReference>
<dbReference type="FunFam" id="2.20.28.20:FF:000001">
    <property type="entry name" value="Methionine--tRNA ligase"/>
    <property type="match status" value="1"/>
</dbReference>
<dbReference type="FunFam" id="1.10.730.10:FF:000037">
    <property type="entry name" value="Methionyl-tRNA synthetase"/>
    <property type="match status" value="1"/>
</dbReference>
<dbReference type="Gene3D" id="3.40.50.620">
    <property type="entry name" value="HUPs"/>
    <property type="match status" value="1"/>
</dbReference>
<dbReference type="Gene3D" id="1.10.730.10">
    <property type="entry name" value="Isoleucyl-tRNA Synthetase, Domain 1"/>
    <property type="match status" value="1"/>
</dbReference>
<dbReference type="Gene3D" id="2.20.28.20">
    <property type="entry name" value="Methionyl-tRNA synthetase, Zn-domain"/>
    <property type="match status" value="1"/>
</dbReference>
<dbReference type="HAMAP" id="MF_00098">
    <property type="entry name" value="Met_tRNA_synth_type1"/>
    <property type="match status" value="1"/>
</dbReference>
<dbReference type="InterPro" id="IPR001412">
    <property type="entry name" value="aa-tRNA-synth_I_CS"/>
</dbReference>
<dbReference type="InterPro" id="IPR041872">
    <property type="entry name" value="Anticodon_Met"/>
</dbReference>
<dbReference type="InterPro" id="IPR023458">
    <property type="entry name" value="Met-tRNA_ligase_1"/>
</dbReference>
<dbReference type="InterPro" id="IPR014758">
    <property type="entry name" value="Met-tRNA_synth"/>
</dbReference>
<dbReference type="InterPro" id="IPR015413">
    <property type="entry name" value="Methionyl/Leucyl_tRNA_Synth"/>
</dbReference>
<dbReference type="InterPro" id="IPR033911">
    <property type="entry name" value="MetRS_core"/>
</dbReference>
<dbReference type="InterPro" id="IPR029038">
    <property type="entry name" value="MetRS_Zn"/>
</dbReference>
<dbReference type="InterPro" id="IPR014729">
    <property type="entry name" value="Rossmann-like_a/b/a_fold"/>
</dbReference>
<dbReference type="InterPro" id="IPR009080">
    <property type="entry name" value="tRNAsynth_Ia_anticodon-bd"/>
</dbReference>
<dbReference type="NCBIfam" id="TIGR00398">
    <property type="entry name" value="metG"/>
    <property type="match status" value="1"/>
</dbReference>
<dbReference type="PANTHER" id="PTHR45765">
    <property type="entry name" value="METHIONINE--TRNA LIGASE"/>
    <property type="match status" value="1"/>
</dbReference>
<dbReference type="PANTHER" id="PTHR45765:SF1">
    <property type="entry name" value="METHIONINE--TRNA LIGASE, CYTOPLASMIC"/>
    <property type="match status" value="1"/>
</dbReference>
<dbReference type="Pfam" id="PF19303">
    <property type="entry name" value="Anticodon_3"/>
    <property type="match status" value="1"/>
</dbReference>
<dbReference type="Pfam" id="PF09334">
    <property type="entry name" value="tRNA-synt_1g"/>
    <property type="match status" value="1"/>
</dbReference>
<dbReference type="PRINTS" id="PR01041">
    <property type="entry name" value="TRNASYNTHMET"/>
</dbReference>
<dbReference type="SUPFAM" id="SSF47323">
    <property type="entry name" value="Anticodon-binding domain of a subclass of class I aminoacyl-tRNA synthetases"/>
    <property type="match status" value="1"/>
</dbReference>
<dbReference type="SUPFAM" id="SSF57770">
    <property type="entry name" value="Methionyl-tRNA synthetase (MetRS), Zn-domain"/>
    <property type="match status" value="1"/>
</dbReference>
<dbReference type="SUPFAM" id="SSF52374">
    <property type="entry name" value="Nucleotidylyl transferase"/>
    <property type="match status" value="1"/>
</dbReference>
<dbReference type="PROSITE" id="PS00178">
    <property type="entry name" value="AA_TRNA_LIGASE_I"/>
    <property type="match status" value="1"/>
</dbReference>
<comment type="catalytic activity">
    <reaction>
        <text>tRNA(Met) + L-methionine + ATP = L-methionyl-tRNA(Met) + AMP + diphosphate</text>
        <dbReference type="Rhea" id="RHEA:13481"/>
        <dbReference type="Rhea" id="RHEA-COMP:9667"/>
        <dbReference type="Rhea" id="RHEA-COMP:9698"/>
        <dbReference type="ChEBI" id="CHEBI:30616"/>
        <dbReference type="ChEBI" id="CHEBI:33019"/>
        <dbReference type="ChEBI" id="CHEBI:57844"/>
        <dbReference type="ChEBI" id="CHEBI:78442"/>
        <dbReference type="ChEBI" id="CHEBI:78530"/>
        <dbReference type="ChEBI" id="CHEBI:456215"/>
        <dbReference type="EC" id="6.1.1.10"/>
    </reaction>
</comment>
<comment type="subcellular location">
    <subcellularLocation>
        <location evidence="1">Cytoplasm</location>
    </subcellularLocation>
</comment>
<comment type="similarity">
    <text evidence="2">Belongs to the class-I aminoacyl-tRNA synthetase family.</text>
</comment>
<comment type="sequence caution" evidence="2">
    <conflict type="erroneous gene model prediction">
        <sequence resource="EMBL-CDS" id="BAA21422"/>
    </conflict>
</comment>
<accession>Q9UUF2</accession>
<accession>O13634</accession>
<keyword id="KW-0030">Aminoacyl-tRNA synthetase</keyword>
<keyword id="KW-0067">ATP-binding</keyword>
<keyword id="KW-0963">Cytoplasm</keyword>
<keyword id="KW-0436">Ligase</keyword>
<keyword id="KW-0547">Nucleotide-binding</keyword>
<keyword id="KW-0648">Protein biosynthesis</keyword>
<keyword id="KW-1185">Reference proteome</keyword>
<sequence>MATYKVQIPASFKTSYSFAESLKVSIAISAFSVKVPCEGAANCNSVRLVNSKEPEKYVSDANAIVSFLYWKQEEDLFNSFISSKLSILDWEALQFTPKAYTAKTKEDFAYLLSQLETIFKENEILNEFTPVEVALASDIYFCVLNGAPVREYPLLSAWYLKIEKQKPFVQALKLTFEKTLGQPAVTSTEKIPVSETTRNVNSQHLMRERVPGEKILPKSNERNILITSALPYVNNVPHLGNIVGSTLSADVFARYHRARNHNTLYICGTDEYGTATETKALEEGVSPKELCDKYHALHKEVYDWFEIDFDHFGRTTTPKQTGIAQHIFTKLYNNDYMAIDTMTQLYCEVHQGYLADRYVEGTCPKCGYDDARGDQCDGCGGLLNAFELIDPKCKLDRATPVKRETKHVFLSLDKLQPAVESWAMQSAVEGKWSNNGRSITESWLKEGLRPRCITRDLKWGTPVPLEEFKGKVLYVWFDATIGYISITANYTDEWEKWWRNPEQVKLYQFMGKDNVPFHTVIFPSSLLGTGEKWTMLHHINTTDYLNYETGKFSKSRGVGVFGNTAQDIGLSPSVWRYYLLSSRPETSDTMFTWKEFITRHNSELLANLGNFVNRTLKFTTAKYNGLVPHYLTDPSVGAGKLKADFVKDVNALLAKYNAALEASKLREGLRLAMEISARGNQYLQDNRIDNKCYLYERQKCADAIGYALNLIYLLAAIFYPYMPSTSTSIYKQLNAPAAAIPDTWELCLLPGHRIGEPEYLFTRIDESMEEEWRSKYGGNGSN</sequence>
<name>SYMC_SCHPO</name>
<organism>
    <name type="scientific">Schizosaccharomyces pombe (strain 972 / ATCC 24843)</name>
    <name type="common">Fission yeast</name>
    <dbReference type="NCBI Taxonomy" id="284812"/>
    <lineage>
        <taxon>Eukaryota</taxon>
        <taxon>Fungi</taxon>
        <taxon>Dikarya</taxon>
        <taxon>Ascomycota</taxon>
        <taxon>Taphrinomycotina</taxon>
        <taxon>Schizosaccharomycetes</taxon>
        <taxon>Schizosaccharomycetales</taxon>
        <taxon>Schizosaccharomycetaceae</taxon>
        <taxon>Schizosaccharomyces</taxon>
    </lineage>
</organism>
<reference key="1">
    <citation type="journal article" date="2000" name="Yeast">
        <title>A 38 kb segment containing the cdc2 gene from the left arm of fission yeast chromosome II: sequence analysis and characterization of the genomic DNA and cDNAs encoded on the segment.</title>
        <authorList>
            <person name="Machida M."/>
            <person name="Yamazaki S."/>
            <person name="Kunihiro S."/>
            <person name="Tanaka T."/>
            <person name="Kushida N."/>
            <person name="Jinno K."/>
            <person name="Haikawa Y."/>
            <person name="Yamazaki J."/>
            <person name="Yamamoto S."/>
            <person name="Sekine M."/>
            <person name="Oguchi A."/>
            <person name="Nagai Y."/>
            <person name="Sakai M."/>
            <person name="Aoki K."/>
            <person name="Ogura K."/>
            <person name="Kudoh Y."/>
            <person name="Kikuchi H."/>
            <person name="Zhang M.Q."/>
            <person name="Yanagida M."/>
        </authorList>
    </citation>
    <scope>NUCLEOTIDE SEQUENCE [LARGE SCALE GENOMIC DNA]</scope>
    <source>
        <strain>972 / ATCC 24843</strain>
    </source>
</reference>
<reference key="2">
    <citation type="journal article" date="2002" name="Nature">
        <title>The genome sequence of Schizosaccharomyces pombe.</title>
        <authorList>
            <person name="Wood V."/>
            <person name="Gwilliam R."/>
            <person name="Rajandream M.A."/>
            <person name="Lyne M.H."/>
            <person name="Lyne R."/>
            <person name="Stewart A."/>
            <person name="Sgouros J.G."/>
            <person name="Peat N."/>
            <person name="Hayles J."/>
            <person name="Baker S.G."/>
            <person name="Basham D."/>
            <person name="Bowman S."/>
            <person name="Brooks K."/>
            <person name="Brown D."/>
            <person name="Brown S."/>
            <person name="Chillingworth T."/>
            <person name="Churcher C.M."/>
            <person name="Collins M."/>
            <person name="Connor R."/>
            <person name="Cronin A."/>
            <person name="Davis P."/>
            <person name="Feltwell T."/>
            <person name="Fraser A."/>
            <person name="Gentles S."/>
            <person name="Goble A."/>
            <person name="Hamlin N."/>
            <person name="Harris D.E."/>
            <person name="Hidalgo J."/>
            <person name="Hodgson G."/>
            <person name="Holroyd S."/>
            <person name="Hornsby T."/>
            <person name="Howarth S."/>
            <person name="Huckle E.J."/>
            <person name="Hunt S."/>
            <person name="Jagels K."/>
            <person name="James K.D."/>
            <person name="Jones L."/>
            <person name="Jones M."/>
            <person name="Leather S."/>
            <person name="McDonald S."/>
            <person name="McLean J."/>
            <person name="Mooney P."/>
            <person name="Moule S."/>
            <person name="Mungall K.L."/>
            <person name="Murphy L.D."/>
            <person name="Niblett D."/>
            <person name="Odell C."/>
            <person name="Oliver K."/>
            <person name="O'Neil S."/>
            <person name="Pearson D."/>
            <person name="Quail M.A."/>
            <person name="Rabbinowitsch E."/>
            <person name="Rutherford K.M."/>
            <person name="Rutter S."/>
            <person name="Saunders D."/>
            <person name="Seeger K."/>
            <person name="Sharp S."/>
            <person name="Skelton J."/>
            <person name="Simmonds M.N."/>
            <person name="Squares R."/>
            <person name="Squares S."/>
            <person name="Stevens K."/>
            <person name="Taylor K."/>
            <person name="Taylor R.G."/>
            <person name="Tivey A."/>
            <person name="Walsh S.V."/>
            <person name="Warren T."/>
            <person name="Whitehead S."/>
            <person name="Woodward J.R."/>
            <person name="Volckaert G."/>
            <person name="Aert R."/>
            <person name="Robben J."/>
            <person name="Grymonprez B."/>
            <person name="Weltjens I."/>
            <person name="Vanstreels E."/>
            <person name="Rieger M."/>
            <person name="Schaefer M."/>
            <person name="Mueller-Auer S."/>
            <person name="Gabel C."/>
            <person name="Fuchs M."/>
            <person name="Duesterhoeft A."/>
            <person name="Fritzc C."/>
            <person name="Holzer E."/>
            <person name="Moestl D."/>
            <person name="Hilbert H."/>
            <person name="Borzym K."/>
            <person name="Langer I."/>
            <person name="Beck A."/>
            <person name="Lehrach H."/>
            <person name="Reinhardt R."/>
            <person name="Pohl T.M."/>
            <person name="Eger P."/>
            <person name="Zimmermann W."/>
            <person name="Wedler H."/>
            <person name="Wambutt R."/>
            <person name="Purnelle B."/>
            <person name="Goffeau A."/>
            <person name="Cadieu E."/>
            <person name="Dreano S."/>
            <person name="Gloux S."/>
            <person name="Lelaure V."/>
            <person name="Mottier S."/>
            <person name="Galibert F."/>
            <person name="Aves S.J."/>
            <person name="Xiang Z."/>
            <person name="Hunt C."/>
            <person name="Moore K."/>
            <person name="Hurst S.M."/>
            <person name="Lucas M."/>
            <person name="Rochet M."/>
            <person name="Gaillardin C."/>
            <person name="Tallada V.A."/>
            <person name="Garzon A."/>
            <person name="Thode G."/>
            <person name="Daga R.R."/>
            <person name="Cruzado L."/>
            <person name="Jimenez J."/>
            <person name="Sanchez M."/>
            <person name="del Rey F."/>
            <person name="Benito J."/>
            <person name="Dominguez A."/>
            <person name="Revuelta J.L."/>
            <person name="Moreno S."/>
            <person name="Armstrong J."/>
            <person name="Forsburg S.L."/>
            <person name="Cerutti L."/>
            <person name="Lowe T."/>
            <person name="McCombie W.R."/>
            <person name="Paulsen I."/>
            <person name="Potashkin J."/>
            <person name="Shpakovski G.V."/>
            <person name="Ussery D."/>
            <person name="Barrell B.G."/>
            <person name="Nurse P."/>
        </authorList>
    </citation>
    <scope>NUCLEOTIDE SEQUENCE [LARGE SCALE GENOMIC DNA]</scope>
    <source>
        <strain>972 / ATCC 24843</strain>
    </source>
</reference>
<reference key="3">
    <citation type="journal article" date="2006" name="Nat. Biotechnol.">
        <title>ORFeome cloning and global analysis of protein localization in the fission yeast Schizosaccharomyces pombe.</title>
        <authorList>
            <person name="Matsuyama A."/>
            <person name="Arai R."/>
            <person name="Yashiroda Y."/>
            <person name="Shirai A."/>
            <person name="Kamata A."/>
            <person name="Sekido S."/>
            <person name="Kobayashi Y."/>
            <person name="Hashimoto A."/>
            <person name="Hamamoto M."/>
            <person name="Hiraoka Y."/>
            <person name="Horinouchi S."/>
            <person name="Yoshida M."/>
        </authorList>
    </citation>
    <scope>SUBCELLULAR LOCATION [LARGE SCALE ANALYSIS]</scope>
</reference>